<feature type="chain" id="PRO_0000163979" description="tRNA dimethylallyltransferase">
    <location>
        <begin position="1"/>
        <end position="332"/>
    </location>
</feature>
<feature type="region of interest" description="Interaction with substrate tRNA" evidence="1">
    <location>
        <begin position="39"/>
        <end position="42"/>
    </location>
</feature>
<feature type="region of interest" description="Disordered" evidence="2">
    <location>
        <begin position="312"/>
        <end position="332"/>
    </location>
</feature>
<feature type="compositionally biased region" description="Basic residues" evidence="2">
    <location>
        <begin position="320"/>
        <end position="332"/>
    </location>
</feature>
<feature type="binding site" evidence="1">
    <location>
        <begin position="14"/>
        <end position="21"/>
    </location>
    <ligand>
        <name>ATP</name>
        <dbReference type="ChEBI" id="CHEBI:30616"/>
    </ligand>
</feature>
<feature type="binding site" evidence="1">
    <location>
        <begin position="16"/>
        <end position="21"/>
    </location>
    <ligand>
        <name>substrate</name>
    </ligand>
</feature>
<feature type="site" description="Interaction with substrate tRNA" evidence="1">
    <location>
        <position position="105"/>
    </location>
</feature>
<comment type="function">
    <text evidence="1">Catalyzes the transfer of a dimethylallyl group onto the adenine at position 37 in tRNAs that read codons beginning with uridine, leading to the formation of N6-(dimethylallyl)adenosine (i(6)A).</text>
</comment>
<comment type="catalytic activity">
    <reaction evidence="1">
        <text>adenosine(37) in tRNA + dimethylallyl diphosphate = N(6)-dimethylallyladenosine(37) in tRNA + diphosphate</text>
        <dbReference type="Rhea" id="RHEA:26482"/>
        <dbReference type="Rhea" id="RHEA-COMP:10162"/>
        <dbReference type="Rhea" id="RHEA-COMP:10375"/>
        <dbReference type="ChEBI" id="CHEBI:33019"/>
        <dbReference type="ChEBI" id="CHEBI:57623"/>
        <dbReference type="ChEBI" id="CHEBI:74411"/>
        <dbReference type="ChEBI" id="CHEBI:74415"/>
        <dbReference type="EC" id="2.5.1.75"/>
    </reaction>
</comment>
<comment type="cofactor">
    <cofactor evidence="1">
        <name>Mg(2+)</name>
        <dbReference type="ChEBI" id="CHEBI:18420"/>
    </cofactor>
</comment>
<comment type="subunit">
    <text evidence="1">Monomer.</text>
</comment>
<comment type="similarity">
    <text evidence="1">Belongs to the IPP transferase family.</text>
</comment>
<evidence type="ECO:0000255" key="1">
    <source>
        <dbReference type="HAMAP-Rule" id="MF_00185"/>
    </source>
</evidence>
<evidence type="ECO:0000256" key="2">
    <source>
        <dbReference type="SAM" id="MobiDB-lite"/>
    </source>
</evidence>
<accession>Q5HPN8</accession>
<organism>
    <name type="scientific">Staphylococcus epidermidis (strain ATCC 35984 / DSM 28319 / BCRC 17069 / CCUG 31568 / BM 3577 / RP62A)</name>
    <dbReference type="NCBI Taxonomy" id="176279"/>
    <lineage>
        <taxon>Bacteria</taxon>
        <taxon>Bacillati</taxon>
        <taxon>Bacillota</taxon>
        <taxon>Bacilli</taxon>
        <taxon>Bacillales</taxon>
        <taxon>Staphylococcaceae</taxon>
        <taxon>Staphylococcus</taxon>
    </lineage>
</organism>
<gene>
    <name evidence="1" type="primary">miaA</name>
    <name type="ordered locus">SERP0870</name>
</gene>
<proteinExistence type="inferred from homology"/>
<dbReference type="EC" id="2.5.1.75" evidence="1"/>
<dbReference type="EMBL" id="CP000029">
    <property type="protein sequence ID" value="AAW54269.1"/>
    <property type="molecule type" value="Genomic_DNA"/>
</dbReference>
<dbReference type="RefSeq" id="WP_002439583.1">
    <property type="nucleotide sequence ID" value="NC_002976.3"/>
</dbReference>
<dbReference type="SMR" id="Q5HPN8"/>
<dbReference type="STRING" id="176279.SERP0870"/>
<dbReference type="GeneID" id="50018885"/>
<dbReference type="KEGG" id="ser:SERP0870"/>
<dbReference type="eggNOG" id="COG0324">
    <property type="taxonomic scope" value="Bacteria"/>
</dbReference>
<dbReference type="HOGENOM" id="CLU_032616_0_1_9"/>
<dbReference type="Proteomes" id="UP000000531">
    <property type="component" value="Chromosome"/>
</dbReference>
<dbReference type="GO" id="GO:0005524">
    <property type="term" value="F:ATP binding"/>
    <property type="evidence" value="ECO:0007669"/>
    <property type="project" value="UniProtKB-UniRule"/>
</dbReference>
<dbReference type="GO" id="GO:0052381">
    <property type="term" value="F:tRNA dimethylallyltransferase activity"/>
    <property type="evidence" value="ECO:0007669"/>
    <property type="project" value="UniProtKB-UniRule"/>
</dbReference>
<dbReference type="GO" id="GO:0006400">
    <property type="term" value="P:tRNA modification"/>
    <property type="evidence" value="ECO:0007669"/>
    <property type="project" value="TreeGrafter"/>
</dbReference>
<dbReference type="Gene3D" id="1.10.20.140">
    <property type="match status" value="1"/>
</dbReference>
<dbReference type="Gene3D" id="3.40.50.300">
    <property type="entry name" value="P-loop containing nucleotide triphosphate hydrolases"/>
    <property type="match status" value="1"/>
</dbReference>
<dbReference type="HAMAP" id="MF_00185">
    <property type="entry name" value="IPP_trans"/>
    <property type="match status" value="1"/>
</dbReference>
<dbReference type="InterPro" id="IPR039657">
    <property type="entry name" value="Dimethylallyltransferase"/>
</dbReference>
<dbReference type="InterPro" id="IPR018022">
    <property type="entry name" value="IPT"/>
</dbReference>
<dbReference type="InterPro" id="IPR027417">
    <property type="entry name" value="P-loop_NTPase"/>
</dbReference>
<dbReference type="NCBIfam" id="TIGR00174">
    <property type="entry name" value="miaA"/>
    <property type="match status" value="1"/>
</dbReference>
<dbReference type="PANTHER" id="PTHR11088">
    <property type="entry name" value="TRNA DIMETHYLALLYLTRANSFERASE"/>
    <property type="match status" value="1"/>
</dbReference>
<dbReference type="PANTHER" id="PTHR11088:SF60">
    <property type="entry name" value="TRNA DIMETHYLALLYLTRANSFERASE"/>
    <property type="match status" value="1"/>
</dbReference>
<dbReference type="Pfam" id="PF01715">
    <property type="entry name" value="IPPT"/>
    <property type="match status" value="1"/>
</dbReference>
<dbReference type="SUPFAM" id="SSF52540">
    <property type="entry name" value="P-loop containing nucleoside triphosphate hydrolases"/>
    <property type="match status" value="2"/>
</dbReference>
<reference key="1">
    <citation type="journal article" date="2005" name="J. Bacteriol.">
        <title>Insights on evolution of virulence and resistance from the complete genome analysis of an early methicillin-resistant Staphylococcus aureus strain and a biofilm-producing methicillin-resistant Staphylococcus epidermidis strain.</title>
        <authorList>
            <person name="Gill S.R."/>
            <person name="Fouts D.E."/>
            <person name="Archer G.L."/>
            <person name="Mongodin E.F."/>
            <person name="DeBoy R.T."/>
            <person name="Ravel J."/>
            <person name="Paulsen I.T."/>
            <person name="Kolonay J.F."/>
            <person name="Brinkac L.M."/>
            <person name="Beanan M.J."/>
            <person name="Dodson R.J."/>
            <person name="Daugherty S.C."/>
            <person name="Madupu R."/>
            <person name="Angiuoli S.V."/>
            <person name="Durkin A.S."/>
            <person name="Haft D.H."/>
            <person name="Vamathevan J.J."/>
            <person name="Khouri H."/>
            <person name="Utterback T.R."/>
            <person name="Lee C."/>
            <person name="Dimitrov G."/>
            <person name="Jiang L."/>
            <person name="Qin H."/>
            <person name="Weidman J."/>
            <person name="Tran K."/>
            <person name="Kang K.H."/>
            <person name="Hance I.R."/>
            <person name="Nelson K.E."/>
            <person name="Fraser C.M."/>
        </authorList>
    </citation>
    <scope>NUCLEOTIDE SEQUENCE [LARGE SCALE GENOMIC DNA]</scope>
    <source>
        <strain>ATCC 35984 / DSM 28319 / BCRC 17069 / CCUG 31568 / BM 3577 / RP62A</strain>
    </source>
</reference>
<name>MIAA_STAEQ</name>
<protein>
    <recommendedName>
        <fullName evidence="1">tRNA dimethylallyltransferase</fullName>
        <ecNumber evidence="1">2.5.1.75</ecNumber>
    </recommendedName>
    <alternativeName>
        <fullName evidence="1">Dimethylallyl diphosphate:tRNA dimethylallyltransferase</fullName>
        <shortName evidence="1">DMAPP:tRNA dimethylallyltransferase</shortName>
        <shortName evidence="1">DMATase</shortName>
    </alternativeName>
    <alternativeName>
        <fullName evidence="1">Isopentenyl-diphosphate:tRNA isopentenyltransferase</fullName>
        <shortName evidence="1">IPP transferase</shortName>
        <shortName evidence="1">IPPT</shortName>
        <shortName evidence="1">IPTase</shortName>
    </alternativeName>
</protein>
<keyword id="KW-0067">ATP-binding</keyword>
<keyword id="KW-0460">Magnesium</keyword>
<keyword id="KW-0547">Nucleotide-binding</keyword>
<keyword id="KW-1185">Reference proteome</keyword>
<keyword id="KW-0808">Transferase</keyword>
<keyword id="KW-0819">tRNA processing</keyword>
<sequence>MTEMTKPFLIVIVGPTASGKTELSIEVAKKFNGEIISGDSMQVYQGMDIGTAKVTTEEMEGIPHYMIDILPPDASFSAYEFKKRAEKYIKDITRRGKVPIIAGGTGLYIQSLLYNYAFEDESISEDKMKQVKLKLKELEHLNNNKLHEYLASFDKESAKDIHPNNRKRVLRAIEYYLKTKKLLSSRKKVQQFTENYDTLLIGIEMSRETLYLRINKRVDIMLGHGLFNEVQHLVEQGFEASQSMQAIGYKELVPVIKGNISMENAVEKLKQHSRQYAKRQLTWFKNKMNVHWLNKERMSLQMMLDEITTQINKRSSNHDCKRKHPRPSTREL</sequence>